<proteinExistence type="evidence at protein level"/>
<sequence length="179" mass="20812">MDREDINPMLSRLDVENNNTFSSFVDKTLMMMPPSTFSGEVEPSSSSSWYPESFHVHAPPLPPENDQIGEKGKELKEKRSRKVPRIAFHTRSDDDVLDDGYRWRKYGQKSVKHNAHPRSYYRCTYHTCNVKKQVQRLAKDPNVVVTTYEGVHNHPCEKLMETLNPLLRQLQFLSSFSNL</sequence>
<accession>Q9FFS3</accession>
<keyword id="KW-0238">DNA-binding</keyword>
<keyword id="KW-0539">Nucleus</keyword>
<keyword id="KW-1185">Reference proteome</keyword>
<keyword id="KW-0804">Transcription</keyword>
<keyword id="KW-0805">Transcription regulation</keyword>
<comment type="function">
    <text evidence="1">Transcription factor. Interacts specifically with the W box (5'-(T)TGAC[CT]-3'), a frequently occurring elicitor-responsive cis-acting element (By similarity).</text>
</comment>
<comment type="interaction">
    <interactant intactId="EBI-4431481">
        <id>Q9FFS3</id>
    </interactant>
    <interactant intactId="EBI-25520113">
        <id>Q84JF0</id>
        <label>APK4</label>
    </interactant>
    <organismsDiffer>false</organismsDiffer>
    <experiments>3</experiments>
</comment>
<comment type="interaction">
    <interactant intactId="EBI-4431481">
        <id>Q9FFS3</id>
    </interactant>
    <interactant intactId="EBI-25517681">
        <id>A0A178VL61</id>
        <label>AXX17_At2g18500</label>
    </interactant>
    <organismsDiffer>false</organismsDiffer>
    <experiments>3</experiments>
</comment>
<comment type="interaction">
    <interactant intactId="EBI-4431481">
        <id>Q9FFS3</id>
    </interactant>
    <interactant intactId="EBI-25517821">
        <id>Q9FNP0</id>
        <label>VQ31</label>
    </interactant>
    <organismsDiffer>false</organismsDiffer>
    <experiments>3</experiments>
</comment>
<comment type="interaction">
    <interactant intactId="EBI-4431481">
        <id>Q9FFS3</id>
    </interactant>
    <interactant intactId="EBI-4451970">
        <id>Q9CA36</id>
        <label>VQ8</label>
    </interactant>
    <organismsDiffer>false</organismsDiffer>
    <experiments>4</experiments>
</comment>
<comment type="subcellular location">
    <subcellularLocation>
        <location evidence="3">Nucleus</location>
    </subcellularLocation>
</comment>
<comment type="similarity">
    <text evidence="3">Belongs to the WRKY group II-c family.</text>
</comment>
<gene>
    <name type="primary">WRKY24</name>
    <name type="ordered locus">At5g41570</name>
    <name type="ORF">MBK23.9</name>
</gene>
<name>WRK24_ARATH</name>
<protein>
    <recommendedName>
        <fullName>Probable WRKY transcription factor 24</fullName>
    </recommendedName>
    <alternativeName>
        <fullName>WRKY DNA-binding protein 24</fullName>
    </alternativeName>
</protein>
<reference key="1">
    <citation type="submission" date="2001-08" db="EMBL/GenBank/DDBJ databases">
        <authorList>
            <person name="Ulker B."/>
            <person name="Kushnir S."/>
            <person name="Somssich I.E."/>
        </authorList>
    </citation>
    <scope>NUCLEOTIDE SEQUENCE [MRNA]</scope>
    <source>
        <strain>cv. Columbia</strain>
        <tissue>Flower</tissue>
    </source>
</reference>
<reference key="2">
    <citation type="journal article" date="1997" name="DNA Res.">
        <title>Structural analysis of Arabidopsis thaliana chromosome 5. I. Sequence features of the 1.6 Mb regions covered by twenty physically assigned P1 clones.</title>
        <authorList>
            <person name="Sato S."/>
            <person name="Kotani H."/>
            <person name="Nakamura Y."/>
            <person name="Kaneko T."/>
            <person name="Asamizu E."/>
            <person name="Fukami M."/>
            <person name="Miyajima N."/>
            <person name="Tabata S."/>
        </authorList>
    </citation>
    <scope>NUCLEOTIDE SEQUENCE [LARGE SCALE GENOMIC DNA]</scope>
    <source>
        <strain>cv. Columbia</strain>
    </source>
</reference>
<reference key="3">
    <citation type="journal article" date="2017" name="Plant J.">
        <title>Araport11: a complete reannotation of the Arabidopsis thaliana reference genome.</title>
        <authorList>
            <person name="Cheng C.Y."/>
            <person name="Krishnakumar V."/>
            <person name="Chan A.P."/>
            <person name="Thibaud-Nissen F."/>
            <person name="Schobel S."/>
            <person name="Town C.D."/>
        </authorList>
    </citation>
    <scope>GENOME REANNOTATION</scope>
    <source>
        <strain>cv. Columbia</strain>
    </source>
</reference>
<reference key="4">
    <citation type="journal article" date="2003" name="Science">
        <title>Empirical analysis of transcriptional activity in the Arabidopsis genome.</title>
        <authorList>
            <person name="Yamada K."/>
            <person name="Lim J."/>
            <person name="Dale J.M."/>
            <person name="Chen H."/>
            <person name="Shinn P."/>
            <person name="Palm C.J."/>
            <person name="Southwick A.M."/>
            <person name="Wu H.C."/>
            <person name="Kim C.J."/>
            <person name="Nguyen M."/>
            <person name="Pham P.K."/>
            <person name="Cheuk R.F."/>
            <person name="Karlin-Newmann G."/>
            <person name="Liu S.X."/>
            <person name="Lam B."/>
            <person name="Sakano H."/>
            <person name="Wu T."/>
            <person name="Yu G."/>
            <person name="Miranda M."/>
            <person name="Quach H.L."/>
            <person name="Tripp M."/>
            <person name="Chang C.H."/>
            <person name="Lee J.M."/>
            <person name="Toriumi M.J."/>
            <person name="Chan M.M."/>
            <person name="Tang C.C."/>
            <person name="Onodera C.S."/>
            <person name="Deng J.M."/>
            <person name="Akiyama K."/>
            <person name="Ansari Y."/>
            <person name="Arakawa T."/>
            <person name="Banh J."/>
            <person name="Banno F."/>
            <person name="Bowser L."/>
            <person name="Brooks S.Y."/>
            <person name="Carninci P."/>
            <person name="Chao Q."/>
            <person name="Choy N."/>
            <person name="Enju A."/>
            <person name="Goldsmith A.D."/>
            <person name="Gurjal M."/>
            <person name="Hansen N.F."/>
            <person name="Hayashizaki Y."/>
            <person name="Johnson-Hopson C."/>
            <person name="Hsuan V.W."/>
            <person name="Iida K."/>
            <person name="Karnes M."/>
            <person name="Khan S."/>
            <person name="Koesema E."/>
            <person name="Ishida J."/>
            <person name="Jiang P.X."/>
            <person name="Jones T."/>
            <person name="Kawai J."/>
            <person name="Kamiya A."/>
            <person name="Meyers C."/>
            <person name="Nakajima M."/>
            <person name="Narusaka M."/>
            <person name="Seki M."/>
            <person name="Sakurai T."/>
            <person name="Satou M."/>
            <person name="Tamse R."/>
            <person name="Vaysberg M."/>
            <person name="Wallender E.K."/>
            <person name="Wong C."/>
            <person name="Yamamura Y."/>
            <person name="Yuan S."/>
            <person name="Shinozaki K."/>
            <person name="Davis R.W."/>
            <person name="Theologis A."/>
            <person name="Ecker J.R."/>
        </authorList>
    </citation>
    <scope>NUCLEOTIDE SEQUENCE [LARGE SCALE MRNA]</scope>
    <source>
        <strain>cv. Columbia</strain>
    </source>
</reference>
<feature type="chain" id="PRO_0000133666" description="Probable WRKY transcription factor 24">
    <location>
        <begin position="1"/>
        <end position="179"/>
    </location>
</feature>
<feature type="DNA-binding region" description="WRKY" evidence="2">
    <location>
        <begin position="92"/>
        <end position="157"/>
    </location>
</feature>
<organism>
    <name type="scientific">Arabidopsis thaliana</name>
    <name type="common">Mouse-ear cress</name>
    <dbReference type="NCBI Taxonomy" id="3702"/>
    <lineage>
        <taxon>Eukaryota</taxon>
        <taxon>Viridiplantae</taxon>
        <taxon>Streptophyta</taxon>
        <taxon>Embryophyta</taxon>
        <taxon>Tracheophyta</taxon>
        <taxon>Spermatophyta</taxon>
        <taxon>Magnoliopsida</taxon>
        <taxon>eudicotyledons</taxon>
        <taxon>Gunneridae</taxon>
        <taxon>Pentapetalae</taxon>
        <taxon>rosids</taxon>
        <taxon>malvids</taxon>
        <taxon>Brassicales</taxon>
        <taxon>Brassicaceae</taxon>
        <taxon>Camelineae</taxon>
        <taxon>Arabidopsis</taxon>
    </lineage>
</organism>
<dbReference type="EMBL" id="AF404864">
    <property type="protein sequence ID" value="AAK96202.1"/>
    <property type="molecule type" value="mRNA"/>
</dbReference>
<dbReference type="EMBL" id="AB005233">
    <property type="protein sequence ID" value="BAB11463.1"/>
    <property type="molecule type" value="Genomic_DNA"/>
</dbReference>
<dbReference type="EMBL" id="CP002688">
    <property type="protein sequence ID" value="AED94693.1"/>
    <property type="molecule type" value="Genomic_DNA"/>
</dbReference>
<dbReference type="EMBL" id="BT004595">
    <property type="protein sequence ID" value="AAO42841.1"/>
    <property type="molecule type" value="mRNA"/>
</dbReference>
<dbReference type="RefSeq" id="NP_198972.1">
    <property type="nucleotide sequence ID" value="NM_123521.4"/>
</dbReference>
<dbReference type="SMR" id="Q9FFS3"/>
<dbReference type="BioGRID" id="19410">
    <property type="interactions" value="4"/>
</dbReference>
<dbReference type="IntAct" id="Q9FFS3">
    <property type="interactions" value="5"/>
</dbReference>
<dbReference type="STRING" id="3702.Q9FFS3"/>
<dbReference type="PaxDb" id="3702-AT5G41570.1"/>
<dbReference type="EnsemblPlants" id="AT5G41570.1">
    <property type="protein sequence ID" value="AT5G41570.1"/>
    <property type="gene ID" value="AT5G41570"/>
</dbReference>
<dbReference type="GeneID" id="834159"/>
<dbReference type="Gramene" id="AT5G41570.1">
    <property type="protein sequence ID" value="AT5G41570.1"/>
    <property type="gene ID" value="AT5G41570"/>
</dbReference>
<dbReference type="KEGG" id="ath:AT5G41570"/>
<dbReference type="Araport" id="AT5G41570"/>
<dbReference type="TAIR" id="AT5G41570">
    <property type="gene designation" value="WRKY24"/>
</dbReference>
<dbReference type="eggNOG" id="ENOG502RXZS">
    <property type="taxonomic scope" value="Eukaryota"/>
</dbReference>
<dbReference type="HOGENOM" id="CLU_073202_4_0_1"/>
<dbReference type="InParanoid" id="Q9FFS3"/>
<dbReference type="OMA" id="KTLMMMP"/>
<dbReference type="PhylomeDB" id="Q9FFS3"/>
<dbReference type="PRO" id="PR:Q9FFS3"/>
<dbReference type="Proteomes" id="UP000006548">
    <property type="component" value="Chromosome 5"/>
</dbReference>
<dbReference type="ExpressionAtlas" id="Q9FFS3">
    <property type="expression patterns" value="baseline and differential"/>
</dbReference>
<dbReference type="GO" id="GO:0005634">
    <property type="term" value="C:nucleus"/>
    <property type="evidence" value="ECO:0007669"/>
    <property type="project" value="UniProtKB-SubCell"/>
</dbReference>
<dbReference type="GO" id="GO:0003700">
    <property type="term" value="F:DNA-binding transcription factor activity"/>
    <property type="evidence" value="ECO:0000250"/>
    <property type="project" value="TAIR"/>
</dbReference>
<dbReference type="GO" id="GO:0043565">
    <property type="term" value="F:sequence-specific DNA binding"/>
    <property type="evidence" value="ECO:0007669"/>
    <property type="project" value="InterPro"/>
</dbReference>
<dbReference type="FunFam" id="2.20.25.80:FF:000003">
    <property type="entry name" value="WRKY transcription factor 57"/>
    <property type="match status" value="1"/>
</dbReference>
<dbReference type="Gene3D" id="2.20.25.80">
    <property type="entry name" value="WRKY domain"/>
    <property type="match status" value="1"/>
</dbReference>
<dbReference type="InterPro" id="IPR003657">
    <property type="entry name" value="WRKY_dom"/>
</dbReference>
<dbReference type="InterPro" id="IPR036576">
    <property type="entry name" value="WRKY_dom_sf"/>
</dbReference>
<dbReference type="InterPro" id="IPR044810">
    <property type="entry name" value="WRKY_plant"/>
</dbReference>
<dbReference type="PANTHER" id="PTHR31221:SF168">
    <property type="entry name" value="WRKY TRANSCRIPTION FACTOR 24-RELATED"/>
    <property type="match status" value="1"/>
</dbReference>
<dbReference type="PANTHER" id="PTHR31221">
    <property type="entry name" value="WRKY TRANSCRIPTION FACTOR PROTEIN 1-RELATED"/>
    <property type="match status" value="1"/>
</dbReference>
<dbReference type="Pfam" id="PF03106">
    <property type="entry name" value="WRKY"/>
    <property type="match status" value="1"/>
</dbReference>
<dbReference type="SMART" id="SM00774">
    <property type="entry name" value="WRKY"/>
    <property type="match status" value="1"/>
</dbReference>
<dbReference type="SUPFAM" id="SSF118290">
    <property type="entry name" value="WRKY DNA-binding domain"/>
    <property type="match status" value="1"/>
</dbReference>
<dbReference type="PROSITE" id="PS50811">
    <property type="entry name" value="WRKY"/>
    <property type="match status" value="1"/>
</dbReference>
<evidence type="ECO:0000250" key="1"/>
<evidence type="ECO:0000255" key="2">
    <source>
        <dbReference type="PROSITE-ProRule" id="PRU00223"/>
    </source>
</evidence>
<evidence type="ECO:0000305" key="3"/>